<protein>
    <recommendedName>
        <fullName evidence="1">Small ribosomal subunit protein uS13</fullName>
    </recommendedName>
    <alternativeName>
        <fullName evidence="3">30S ribosomal protein S13</fullName>
    </alternativeName>
</protein>
<sequence length="121" mass="13716">MARIAGIDIPSDKRVVIALTYIYGLGKKLSQKILNELNISHDIRVKNLTEQQLSSLRSEITKYSVEGDLRREVTLNIKRLMEIGVYRGLRHRKGLPVRGQKTRNNAHTVKGKPKSIAGKKK</sequence>
<reference key="1">
    <citation type="journal article" date="2008" name="J. Bacteriol.">
        <title>Comparative genome analysis of 'Candidatus Phytoplasma australiense' (subgroup tuf-Australia I; rp-A) and 'Ca. Phytoplasma asteris' strains OY-M and AY-WB.</title>
        <authorList>
            <person name="Tran-Nguyen L.T."/>
            <person name="Kube M."/>
            <person name="Schneider B."/>
            <person name="Reinhardt R."/>
            <person name="Gibb K.S."/>
        </authorList>
    </citation>
    <scope>NUCLEOTIDE SEQUENCE [LARGE SCALE GENOMIC DNA]</scope>
</reference>
<gene>
    <name evidence="1" type="primary">rpsM</name>
    <name type="ordered locus">PA0562</name>
</gene>
<keyword id="KW-1185">Reference proteome</keyword>
<keyword id="KW-0687">Ribonucleoprotein</keyword>
<keyword id="KW-0689">Ribosomal protein</keyword>
<keyword id="KW-0694">RNA-binding</keyword>
<keyword id="KW-0699">rRNA-binding</keyword>
<keyword id="KW-0820">tRNA-binding</keyword>
<feature type="chain" id="PRO_1000141298" description="Small ribosomal subunit protein uS13">
    <location>
        <begin position="1"/>
        <end position="121"/>
    </location>
</feature>
<feature type="region of interest" description="Disordered" evidence="2">
    <location>
        <begin position="98"/>
        <end position="121"/>
    </location>
</feature>
<feature type="compositionally biased region" description="Basic residues" evidence="2">
    <location>
        <begin position="109"/>
        <end position="121"/>
    </location>
</feature>
<name>RS13_PHYAS</name>
<accession>B1VAC3</accession>
<comment type="function">
    <text evidence="1">Located at the top of the head of the 30S subunit, it contacts several helices of the 16S rRNA. In the 70S ribosome it contacts the 23S rRNA (bridge B1a) and protein L5 of the 50S subunit (bridge B1b), connecting the 2 subunits; these bridges are implicated in subunit movement. Contacts the tRNAs in the A and P-sites.</text>
</comment>
<comment type="subunit">
    <text evidence="1">Part of the 30S ribosomal subunit. Forms a loose heterodimer with protein S19. Forms two bridges to the 50S subunit in the 70S ribosome.</text>
</comment>
<comment type="similarity">
    <text evidence="1">Belongs to the universal ribosomal protein uS13 family.</text>
</comment>
<proteinExistence type="inferred from homology"/>
<dbReference type="EMBL" id="AM422018">
    <property type="protein sequence ID" value="CAM11896.1"/>
    <property type="molecule type" value="Genomic_DNA"/>
</dbReference>
<dbReference type="SMR" id="B1VAC3"/>
<dbReference type="STRING" id="59748.PA0562"/>
<dbReference type="KEGG" id="pal:PA0562"/>
<dbReference type="eggNOG" id="COG0099">
    <property type="taxonomic scope" value="Bacteria"/>
</dbReference>
<dbReference type="Proteomes" id="UP000008323">
    <property type="component" value="Chromosome"/>
</dbReference>
<dbReference type="GO" id="GO:0005829">
    <property type="term" value="C:cytosol"/>
    <property type="evidence" value="ECO:0007669"/>
    <property type="project" value="TreeGrafter"/>
</dbReference>
<dbReference type="GO" id="GO:0015935">
    <property type="term" value="C:small ribosomal subunit"/>
    <property type="evidence" value="ECO:0007669"/>
    <property type="project" value="TreeGrafter"/>
</dbReference>
<dbReference type="GO" id="GO:0019843">
    <property type="term" value="F:rRNA binding"/>
    <property type="evidence" value="ECO:0007669"/>
    <property type="project" value="UniProtKB-UniRule"/>
</dbReference>
<dbReference type="GO" id="GO:0003735">
    <property type="term" value="F:structural constituent of ribosome"/>
    <property type="evidence" value="ECO:0007669"/>
    <property type="project" value="InterPro"/>
</dbReference>
<dbReference type="GO" id="GO:0000049">
    <property type="term" value="F:tRNA binding"/>
    <property type="evidence" value="ECO:0007669"/>
    <property type="project" value="UniProtKB-UniRule"/>
</dbReference>
<dbReference type="GO" id="GO:0006412">
    <property type="term" value="P:translation"/>
    <property type="evidence" value="ECO:0007669"/>
    <property type="project" value="UniProtKB-UniRule"/>
</dbReference>
<dbReference type="FunFam" id="1.10.8.50:FF:000001">
    <property type="entry name" value="30S ribosomal protein S13"/>
    <property type="match status" value="1"/>
</dbReference>
<dbReference type="FunFam" id="4.10.910.10:FF:000001">
    <property type="entry name" value="30S ribosomal protein S13"/>
    <property type="match status" value="1"/>
</dbReference>
<dbReference type="Gene3D" id="1.10.8.50">
    <property type="match status" value="1"/>
</dbReference>
<dbReference type="Gene3D" id="4.10.910.10">
    <property type="entry name" value="30s ribosomal protein s13, domain 2"/>
    <property type="match status" value="1"/>
</dbReference>
<dbReference type="HAMAP" id="MF_01315">
    <property type="entry name" value="Ribosomal_uS13"/>
    <property type="match status" value="1"/>
</dbReference>
<dbReference type="InterPro" id="IPR027437">
    <property type="entry name" value="Rbsml_uS13_C"/>
</dbReference>
<dbReference type="InterPro" id="IPR001892">
    <property type="entry name" value="Ribosomal_uS13"/>
</dbReference>
<dbReference type="InterPro" id="IPR010979">
    <property type="entry name" value="Ribosomal_uS13-like_H2TH"/>
</dbReference>
<dbReference type="InterPro" id="IPR019980">
    <property type="entry name" value="Ribosomal_uS13_bac-type"/>
</dbReference>
<dbReference type="InterPro" id="IPR018269">
    <property type="entry name" value="Ribosomal_uS13_CS"/>
</dbReference>
<dbReference type="NCBIfam" id="TIGR03631">
    <property type="entry name" value="uS13_bact"/>
    <property type="match status" value="1"/>
</dbReference>
<dbReference type="PANTHER" id="PTHR10871">
    <property type="entry name" value="30S RIBOSOMAL PROTEIN S13/40S RIBOSOMAL PROTEIN S18"/>
    <property type="match status" value="1"/>
</dbReference>
<dbReference type="PANTHER" id="PTHR10871:SF1">
    <property type="entry name" value="SMALL RIBOSOMAL SUBUNIT PROTEIN US13M"/>
    <property type="match status" value="1"/>
</dbReference>
<dbReference type="Pfam" id="PF00416">
    <property type="entry name" value="Ribosomal_S13"/>
    <property type="match status" value="1"/>
</dbReference>
<dbReference type="PIRSF" id="PIRSF002134">
    <property type="entry name" value="Ribosomal_S13"/>
    <property type="match status" value="1"/>
</dbReference>
<dbReference type="SUPFAM" id="SSF46946">
    <property type="entry name" value="S13-like H2TH domain"/>
    <property type="match status" value="1"/>
</dbReference>
<dbReference type="PROSITE" id="PS00646">
    <property type="entry name" value="RIBOSOMAL_S13_1"/>
    <property type="match status" value="1"/>
</dbReference>
<dbReference type="PROSITE" id="PS50159">
    <property type="entry name" value="RIBOSOMAL_S13_2"/>
    <property type="match status" value="1"/>
</dbReference>
<organism>
    <name type="scientific">Phytoplasma australiense</name>
    <dbReference type="NCBI Taxonomy" id="59748"/>
    <lineage>
        <taxon>Bacteria</taxon>
        <taxon>Bacillati</taxon>
        <taxon>Mycoplasmatota</taxon>
        <taxon>Mollicutes</taxon>
        <taxon>Acholeplasmatales</taxon>
        <taxon>Acholeplasmataceae</taxon>
        <taxon>Candidatus Phytoplasma</taxon>
        <taxon>16SrXII (Stolbur group)</taxon>
    </lineage>
</organism>
<evidence type="ECO:0000255" key="1">
    <source>
        <dbReference type="HAMAP-Rule" id="MF_01315"/>
    </source>
</evidence>
<evidence type="ECO:0000256" key="2">
    <source>
        <dbReference type="SAM" id="MobiDB-lite"/>
    </source>
</evidence>
<evidence type="ECO:0000305" key="3"/>